<reference key="1">
    <citation type="journal article" date="2005" name="J. Infect. Dis.">
        <title>Genome sequence of a serotype M28 strain of group A Streptococcus: potential new insights into puerperal sepsis and bacterial disease specificity.</title>
        <authorList>
            <person name="Green N.M."/>
            <person name="Zhang S."/>
            <person name="Porcella S.F."/>
            <person name="Nagiec M.J."/>
            <person name="Barbian K.D."/>
            <person name="Beres S.B."/>
            <person name="Lefebvre R.B."/>
            <person name="Musser J.M."/>
        </authorList>
    </citation>
    <scope>NUCLEOTIDE SEQUENCE [LARGE SCALE GENOMIC DNA]</scope>
    <source>
        <strain>MGAS6180</strain>
    </source>
</reference>
<comment type="function">
    <text evidence="1">Catalyzes the formation of S-adenosylmethionine (AdoMet) from methionine and ATP. The overall synthetic reaction is composed of two sequential steps, AdoMet formation and the subsequent tripolyphosphate hydrolysis which occurs prior to release of AdoMet from the enzyme.</text>
</comment>
<comment type="catalytic activity">
    <reaction evidence="1">
        <text>L-methionine + ATP + H2O = S-adenosyl-L-methionine + phosphate + diphosphate</text>
        <dbReference type="Rhea" id="RHEA:21080"/>
        <dbReference type="ChEBI" id="CHEBI:15377"/>
        <dbReference type="ChEBI" id="CHEBI:30616"/>
        <dbReference type="ChEBI" id="CHEBI:33019"/>
        <dbReference type="ChEBI" id="CHEBI:43474"/>
        <dbReference type="ChEBI" id="CHEBI:57844"/>
        <dbReference type="ChEBI" id="CHEBI:59789"/>
        <dbReference type="EC" id="2.5.1.6"/>
    </reaction>
</comment>
<comment type="cofactor">
    <cofactor evidence="1">
        <name>Mg(2+)</name>
        <dbReference type="ChEBI" id="CHEBI:18420"/>
    </cofactor>
    <text evidence="1">Binds 2 divalent ions per subunit.</text>
</comment>
<comment type="cofactor">
    <cofactor evidence="1">
        <name>K(+)</name>
        <dbReference type="ChEBI" id="CHEBI:29103"/>
    </cofactor>
    <text evidence="1">Binds 1 potassium ion per subunit.</text>
</comment>
<comment type="pathway">
    <text evidence="1">Amino-acid biosynthesis; S-adenosyl-L-methionine biosynthesis; S-adenosyl-L-methionine from L-methionine: step 1/1.</text>
</comment>
<comment type="subunit">
    <text evidence="1">Homotetramer; dimer of dimers.</text>
</comment>
<comment type="subcellular location">
    <subcellularLocation>
        <location evidence="1">Cytoplasm</location>
    </subcellularLocation>
</comment>
<comment type="similarity">
    <text evidence="1">Belongs to the AdoMet synthase family.</text>
</comment>
<accession>Q48SU7</accession>
<sequence length="398" mass="43144">MSERKLFTSESVSEGHPDKIADQISDAILDAILAEDPEAHVAAETCVYTGSVHVFGEISTKAYIDINRVVRDTIAEIGYTEAEYGFSAESVGVHPSLVEQSGDIAQGVNEALESREGDTDDLSHIGAGDQGLMFGFAINETPELMPLPISLSHQLVRRLAELRKSGEISYLRPDAKSQVTVEYDEHDKPVRVDTVVISTQHDPEATNDQIRQDVIEKVIKAVIPADYLDDDTKFFINPTGRFVIGGPQGDSGLTGRKIIVDTYGGYSRHGGGAFSGKDATKVDRSASYAARYIAKNLVAAGLATKAEVQLAYAIGVAQPVSVRVDTFGTSTVPEAVLEAAVRQVFDLRPAGIIQMLDLKRPIYKQTAAYGHMGRTDIDLPWERLNKVDALVEAVKTVL</sequence>
<evidence type="ECO:0000255" key="1">
    <source>
        <dbReference type="HAMAP-Rule" id="MF_00086"/>
    </source>
</evidence>
<feature type="chain" id="PRO_0000241044" description="S-adenosylmethionine synthase">
    <location>
        <begin position="1"/>
        <end position="398"/>
    </location>
</feature>
<feature type="region of interest" description="Flexible loop" evidence="1">
    <location>
        <begin position="100"/>
        <end position="110"/>
    </location>
</feature>
<feature type="binding site" description="in other chain" evidence="1">
    <location>
        <position position="16"/>
    </location>
    <ligand>
        <name>ATP</name>
        <dbReference type="ChEBI" id="CHEBI:30616"/>
        <note>ligand shared between two neighboring subunits</note>
    </ligand>
</feature>
<feature type="binding site" evidence="1">
    <location>
        <position position="18"/>
    </location>
    <ligand>
        <name>Mg(2+)</name>
        <dbReference type="ChEBI" id="CHEBI:18420"/>
    </ligand>
</feature>
<feature type="binding site" evidence="1">
    <location>
        <position position="44"/>
    </location>
    <ligand>
        <name>K(+)</name>
        <dbReference type="ChEBI" id="CHEBI:29103"/>
    </ligand>
</feature>
<feature type="binding site" description="in other chain" evidence="1">
    <location>
        <position position="57"/>
    </location>
    <ligand>
        <name>L-methionine</name>
        <dbReference type="ChEBI" id="CHEBI:57844"/>
        <note>ligand shared between two neighboring subunits</note>
    </ligand>
</feature>
<feature type="binding site" description="in other chain" evidence="1">
    <location>
        <position position="100"/>
    </location>
    <ligand>
        <name>L-methionine</name>
        <dbReference type="ChEBI" id="CHEBI:57844"/>
        <note>ligand shared between two neighboring subunits</note>
    </ligand>
</feature>
<feature type="binding site" description="in other chain" evidence="1">
    <location>
        <begin position="174"/>
        <end position="176"/>
    </location>
    <ligand>
        <name>ATP</name>
        <dbReference type="ChEBI" id="CHEBI:30616"/>
        <note>ligand shared between two neighboring subunits</note>
    </ligand>
</feature>
<feature type="binding site" description="in other chain" evidence="1">
    <location>
        <begin position="241"/>
        <end position="242"/>
    </location>
    <ligand>
        <name>ATP</name>
        <dbReference type="ChEBI" id="CHEBI:30616"/>
        <note>ligand shared between two neighboring subunits</note>
    </ligand>
</feature>
<feature type="binding site" evidence="1">
    <location>
        <position position="250"/>
    </location>
    <ligand>
        <name>ATP</name>
        <dbReference type="ChEBI" id="CHEBI:30616"/>
        <note>ligand shared between two neighboring subunits</note>
    </ligand>
</feature>
<feature type="binding site" evidence="1">
    <location>
        <position position="250"/>
    </location>
    <ligand>
        <name>L-methionine</name>
        <dbReference type="ChEBI" id="CHEBI:57844"/>
        <note>ligand shared between two neighboring subunits</note>
    </ligand>
</feature>
<feature type="binding site" description="in other chain" evidence="1">
    <location>
        <begin position="256"/>
        <end position="257"/>
    </location>
    <ligand>
        <name>ATP</name>
        <dbReference type="ChEBI" id="CHEBI:30616"/>
        <note>ligand shared between two neighboring subunits</note>
    </ligand>
</feature>
<feature type="binding site" evidence="1">
    <location>
        <position position="273"/>
    </location>
    <ligand>
        <name>ATP</name>
        <dbReference type="ChEBI" id="CHEBI:30616"/>
        <note>ligand shared between two neighboring subunits</note>
    </ligand>
</feature>
<feature type="binding site" evidence="1">
    <location>
        <position position="277"/>
    </location>
    <ligand>
        <name>ATP</name>
        <dbReference type="ChEBI" id="CHEBI:30616"/>
        <note>ligand shared between two neighboring subunits</note>
    </ligand>
</feature>
<feature type="binding site" description="in other chain" evidence="1">
    <location>
        <position position="281"/>
    </location>
    <ligand>
        <name>L-methionine</name>
        <dbReference type="ChEBI" id="CHEBI:57844"/>
        <note>ligand shared between two neighboring subunits</note>
    </ligand>
</feature>
<name>METK_STRPM</name>
<organism>
    <name type="scientific">Streptococcus pyogenes serotype M28 (strain MGAS6180)</name>
    <dbReference type="NCBI Taxonomy" id="319701"/>
    <lineage>
        <taxon>Bacteria</taxon>
        <taxon>Bacillati</taxon>
        <taxon>Bacillota</taxon>
        <taxon>Bacilli</taxon>
        <taxon>Lactobacillales</taxon>
        <taxon>Streptococcaceae</taxon>
        <taxon>Streptococcus</taxon>
    </lineage>
</organism>
<protein>
    <recommendedName>
        <fullName evidence="1">S-adenosylmethionine synthase</fullName>
        <shortName evidence="1">AdoMet synthase</shortName>
        <ecNumber evidence="1">2.5.1.6</ecNumber>
    </recommendedName>
    <alternativeName>
        <fullName evidence="1">MAT</fullName>
    </alternativeName>
    <alternativeName>
        <fullName evidence="1">Methionine adenosyltransferase</fullName>
    </alternativeName>
</protein>
<gene>
    <name evidence="1" type="primary">metK</name>
    <name type="ordered locus">M28_Spy1100</name>
</gene>
<keyword id="KW-0067">ATP-binding</keyword>
<keyword id="KW-0963">Cytoplasm</keyword>
<keyword id="KW-0460">Magnesium</keyword>
<keyword id="KW-0479">Metal-binding</keyword>
<keyword id="KW-0547">Nucleotide-binding</keyword>
<keyword id="KW-0554">One-carbon metabolism</keyword>
<keyword id="KW-0630">Potassium</keyword>
<keyword id="KW-0808">Transferase</keyword>
<dbReference type="EC" id="2.5.1.6" evidence="1"/>
<dbReference type="EMBL" id="CP000056">
    <property type="protein sequence ID" value="AAX72213.1"/>
    <property type="molecule type" value="Genomic_DNA"/>
</dbReference>
<dbReference type="RefSeq" id="WP_011284923.1">
    <property type="nucleotide sequence ID" value="NC_007296.2"/>
</dbReference>
<dbReference type="SMR" id="Q48SU7"/>
<dbReference type="KEGG" id="spb:M28_Spy1100"/>
<dbReference type="HOGENOM" id="CLU_041802_1_1_9"/>
<dbReference type="UniPathway" id="UPA00315">
    <property type="reaction ID" value="UER00080"/>
</dbReference>
<dbReference type="GO" id="GO:0005737">
    <property type="term" value="C:cytoplasm"/>
    <property type="evidence" value="ECO:0007669"/>
    <property type="project" value="UniProtKB-SubCell"/>
</dbReference>
<dbReference type="GO" id="GO:0005524">
    <property type="term" value="F:ATP binding"/>
    <property type="evidence" value="ECO:0007669"/>
    <property type="project" value="UniProtKB-UniRule"/>
</dbReference>
<dbReference type="GO" id="GO:0000287">
    <property type="term" value="F:magnesium ion binding"/>
    <property type="evidence" value="ECO:0007669"/>
    <property type="project" value="UniProtKB-UniRule"/>
</dbReference>
<dbReference type="GO" id="GO:0004478">
    <property type="term" value="F:methionine adenosyltransferase activity"/>
    <property type="evidence" value="ECO:0007669"/>
    <property type="project" value="UniProtKB-UniRule"/>
</dbReference>
<dbReference type="GO" id="GO:0006730">
    <property type="term" value="P:one-carbon metabolic process"/>
    <property type="evidence" value="ECO:0007669"/>
    <property type="project" value="UniProtKB-KW"/>
</dbReference>
<dbReference type="GO" id="GO:0006556">
    <property type="term" value="P:S-adenosylmethionine biosynthetic process"/>
    <property type="evidence" value="ECO:0007669"/>
    <property type="project" value="UniProtKB-UniRule"/>
</dbReference>
<dbReference type="CDD" id="cd18079">
    <property type="entry name" value="S-AdoMet_synt"/>
    <property type="match status" value="1"/>
</dbReference>
<dbReference type="FunFam" id="3.30.300.10:FF:000003">
    <property type="entry name" value="S-adenosylmethionine synthase"/>
    <property type="match status" value="1"/>
</dbReference>
<dbReference type="Gene3D" id="3.30.300.10">
    <property type="match status" value="3"/>
</dbReference>
<dbReference type="HAMAP" id="MF_00086">
    <property type="entry name" value="S_AdoMet_synth1"/>
    <property type="match status" value="1"/>
</dbReference>
<dbReference type="InterPro" id="IPR022631">
    <property type="entry name" value="ADOMET_SYNTHASE_CS"/>
</dbReference>
<dbReference type="InterPro" id="IPR022630">
    <property type="entry name" value="S-AdoMet_synt_C"/>
</dbReference>
<dbReference type="InterPro" id="IPR022629">
    <property type="entry name" value="S-AdoMet_synt_central"/>
</dbReference>
<dbReference type="InterPro" id="IPR022628">
    <property type="entry name" value="S-AdoMet_synt_N"/>
</dbReference>
<dbReference type="InterPro" id="IPR002133">
    <property type="entry name" value="S-AdoMet_synthetase"/>
</dbReference>
<dbReference type="InterPro" id="IPR022636">
    <property type="entry name" value="S-AdoMet_synthetase_sfam"/>
</dbReference>
<dbReference type="NCBIfam" id="TIGR01034">
    <property type="entry name" value="metK"/>
    <property type="match status" value="1"/>
</dbReference>
<dbReference type="PANTHER" id="PTHR11964">
    <property type="entry name" value="S-ADENOSYLMETHIONINE SYNTHETASE"/>
    <property type="match status" value="1"/>
</dbReference>
<dbReference type="Pfam" id="PF02773">
    <property type="entry name" value="S-AdoMet_synt_C"/>
    <property type="match status" value="1"/>
</dbReference>
<dbReference type="Pfam" id="PF02772">
    <property type="entry name" value="S-AdoMet_synt_M"/>
    <property type="match status" value="1"/>
</dbReference>
<dbReference type="Pfam" id="PF00438">
    <property type="entry name" value="S-AdoMet_synt_N"/>
    <property type="match status" value="1"/>
</dbReference>
<dbReference type="PIRSF" id="PIRSF000497">
    <property type="entry name" value="MAT"/>
    <property type="match status" value="1"/>
</dbReference>
<dbReference type="SUPFAM" id="SSF55973">
    <property type="entry name" value="S-adenosylmethionine synthetase"/>
    <property type="match status" value="3"/>
</dbReference>
<dbReference type="PROSITE" id="PS00376">
    <property type="entry name" value="ADOMET_SYNTHASE_1"/>
    <property type="match status" value="1"/>
</dbReference>
<dbReference type="PROSITE" id="PS00377">
    <property type="entry name" value="ADOMET_SYNTHASE_2"/>
    <property type="match status" value="1"/>
</dbReference>
<proteinExistence type="inferred from homology"/>